<evidence type="ECO:0000255" key="1">
    <source>
        <dbReference type="HAMAP-Rule" id="MF_00164"/>
    </source>
</evidence>
<evidence type="ECO:0000256" key="2">
    <source>
        <dbReference type="SAM" id="MobiDB-lite"/>
    </source>
</evidence>
<organism>
    <name type="scientific">Tropheryma whipplei (strain TW08/27)</name>
    <name type="common">Whipple's bacillus</name>
    <dbReference type="NCBI Taxonomy" id="218496"/>
    <lineage>
        <taxon>Bacteria</taxon>
        <taxon>Bacillati</taxon>
        <taxon>Actinomycetota</taxon>
        <taxon>Actinomycetes</taxon>
        <taxon>Micrococcales</taxon>
        <taxon>Tropherymataceae</taxon>
        <taxon>Tropheryma</taxon>
    </lineage>
</organism>
<proteinExistence type="inferred from homology"/>
<accession>Q83IA1</accession>
<dbReference type="EC" id="2.6.1.16" evidence="1"/>
<dbReference type="EMBL" id="BX251410">
    <property type="protein sequence ID" value="CAD66838.1"/>
    <property type="molecule type" value="Genomic_DNA"/>
</dbReference>
<dbReference type="RefSeq" id="WP_011096119.1">
    <property type="nucleotide sequence ID" value="NC_004551.1"/>
</dbReference>
<dbReference type="SMR" id="Q83IA1"/>
<dbReference type="GeneID" id="67387931"/>
<dbReference type="KEGG" id="tws:TW158"/>
<dbReference type="HOGENOM" id="CLU_012520_5_2_11"/>
<dbReference type="GO" id="GO:0005829">
    <property type="term" value="C:cytosol"/>
    <property type="evidence" value="ECO:0007669"/>
    <property type="project" value="TreeGrafter"/>
</dbReference>
<dbReference type="GO" id="GO:0097367">
    <property type="term" value="F:carbohydrate derivative binding"/>
    <property type="evidence" value="ECO:0007669"/>
    <property type="project" value="InterPro"/>
</dbReference>
<dbReference type="GO" id="GO:0004360">
    <property type="term" value="F:glutamine-fructose-6-phosphate transaminase (isomerizing) activity"/>
    <property type="evidence" value="ECO:0007669"/>
    <property type="project" value="UniProtKB-UniRule"/>
</dbReference>
<dbReference type="GO" id="GO:0005975">
    <property type="term" value="P:carbohydrate metabolic process"/>
    <property type="evidence" value="ECO:0007669"/>
    <property type="project" value="UniProtKB-UniRule"/>
</dbReference>
<dbReference type="GO" id="GO:0006002">
    <property type="term" value="P:fructose 6-phosphate metabolic process"/>
    <property type="evidence" value="ECO:0007669"/>
    <property type="project" value="TreeGrafter"/>
</dbReference>
<dbReference type="GO" id="GO:0006487">
    <property type="term" value="P:protein N-linked glycosylation"/>
    <property type="evidence" value="ECO:0007669"/>
    <property type="project" value="TreeGrafter"/>
</dbReference>
<dbReference type="GO" id="GO:0006047">
    <property type="term" value="P:UDP-N-acetylglucosamine metabolic process"/>
    <property type="evidence" value="ECO:0007669"/>
    <property type="project" value="TreeGrafter"/>
</dbReference>
<dbReference type="CDD" id="cd00714">
    <property type="entry name" value="GFAT"/>
    <property type="match status" value="1"/>
</dbReference>
<dbReference type="CDD" id="cd05008">
    <property type="entry name" value="SIS_GlmS_GlmD_1"/>
    <property type="match status" value="1"/>
</dbReference>
<dbReference type="CDD" id="cd05009">
    <property type="entry name" value="SIS_GlmS_GlmD_2"/>
    <property type="match status" value="1"/>
</dbReference>
<dbReference type="FunFam" id="3.40.50.10490:FF:000001">
    <property type="entry name" value="Glutamine--fructose-6-phosphate aminotransferase [isomerizing]"/>
    <property type="match status" value="1"/>
</dbReference>
<dbReference type="FunFam" id="3.60.20.10:FF:000006">
    <property type="entry name" value="Glutamine--fructose-6-phosphate aminotransferase [isomerizing]"/>
    <property type="match status" value="1"/>
</dbReference>
<dbReference type="Gene3D" id="3.40.50.10490">
    <property type="entry name" value="Glucose-6-phosphate isomerase like protein, domain 1"/>
    <property type="match status" value="2"/>
</dbReference>
<dbReference type="Gene3D" id="3.60.20.10">
    <property type="entry name" value="Glutamine Phosphoribosylpyrophosphate, subunit 1, domain 1"/>
    <property type="match status" value="1"/>
</dbReference>
<dbReference type="HAMAP" id="MF_00164">
    <property type="entry name" value="GlmS"/>
    <property type="match status" value="1"/>
</dbReference>
<dbReference type="InterPro" id="IPR017932">
    <property type="entry name" value="GATase_2_dom"/>
</dbReference>
<dbReference type="InterPro" id="IPR005855">
    <property type="entry name" value="GFAT"/>
</dbReference>
<dbReference type="InterPro" id="IPR047084">
    <property type="entry name" value="GFAT_N"/>
</dbReference>
<dbReference type="InterPro" id="IPR035466">
    <property type="entry name" value="GlmS/AgaS_SIS"/>
</dbReference>
<dbReference type="InterPro" id="IPR035490">
    <property type="entry name" value="GlmS/FrlB_SIS"/>
</dbReference>
<dbReference type="InterPro" id="IPR029055">
    <property type="entry name" value="Ntn_hydrolases_N"/>
</dbReference>
<dbReference type="InterPro" id="IPR001347">
    <property type="entry name" value="SIS_dom"/>
</dbReference>
<dbReference type="InterPro" id="IPR046348">
    <property type="entry name" value="SIS_dom_sf"/>
</dbReference>
<dbReference type="NCBIfam" id="TIGR01135">
    <property type="entry name" value="glmS"/>
    <property type="match status" value="1"/>
</dbReference>
<dbReference type="NCBIfam" id="NF001484">
    <property type="entry name" value="PRK00331.1"/>
    <property type="match status" value="1"/>
</dbReference>
<dbReference type="PANTHER" id="PTHR10937">
    <property type="entry name" value="GLUCOSAMINE--FRUCTOSE-6-PHOSPHATE AMINOTRANSFERASE, ISOMERIZING"/>
    <property type="match status" value="1"/>
</dbReference>
<dbReference type="PANTHER" id="PTHR10937:SF0">
    <property type="entry name" value="GLUTAMINE--FRUCTOSE-6-PHOSPHATE TRANSAMINASE (ISOMERIZING)"/>
    <property type="match status" value="1"/>
</dbReference>
<dbReference type="Pfam" id="PF13522">
    <property type="entry name" value="GATase_6"/>
    <property type="match status" value="1"/>
</dbReference>
<dbReference type="Pfam" id="PF01380">
    <property type="entry name" value="SIS"/>
    <property type="match status" value="2"/>
</dbReference>
<dbReference type="SUPFAM" id="SSF56235">
    <property type="entry name" value="N-terminal nucleophile aminohydrolases (Ntn hydrolases)"/>
    <property type="match status" value="1"/>
</dbReference>
<dbReference type="SUPFAM" id="SSF53697">
    <property type="entry name" value="SIS domain"/>
    <property type="match status" value="1"/>
</dbReference>
<dbReference type="PROSITE" id="PS51278">
    <property type="entry name" value="GATASE_TYPE_2"/>
    <property type="match status" value="1"/>
</dbReference>
<dbReference type="PROSITE" id="PS51464">
    <property type="entry name" value="SIS"/>
    <property type="match status" value="2"/>
</dbReference>
<reference key="1">
    <citation type="journal article" date="2003" name="Lancet">
        <title>Sequencing and analysis of the genome of the Whipple's disease bacterium Tropheryma whipplei.</title>
        <authorList>
            <person name="Bentley S.D."/>
            <person name="Maiwald M."/>
            <person name="Murphy L.D."/>
            <person name="Pallen M.J."/>
            <person name="Yeats C.A."/>
            <person name="Dover L.G."/>
            <person name="Norbertczak H.T."/>
            <person name="Besra G.S."/>
            <person name="Quail M.A."/>
            <person name="Harris D.E."/>
            <person name="von Herbay A."/>
            <person name="Goble A."/>
            <person name="Rutter S."/>
            <person name="Squares R."/>
            <person name="Squares S."/>
            <person name="Barrell B.G."/>
            <person name="Parkhill J."/>
            <person name="Relman D.A."/>
        </authorList>
    </citation>
    <scope>NUCLEOTIDE SEQUENCE [LARGE SCALE GENOMIC DNA]</scope>
    <source>
        <strain>TW08/27</strain>
    </source>
</reference>
<protein>
    <recommendedName>
        <fullName evidence="1">Glutamine--fructose-6-phosphate aminotransferase [isomerizing]</fullName>
        <ecNumber evidence="1">2.6.1.16</ecNumber>
    </recommendedName>
    <alternativeName>
        <fullName evidence="1">D-fructose-6-phosphate amidotransferase</fullName>
    </alternativeName>
    <alternativeName>
        <fullName evidence="1">GFAT</fullName>
    </alternativeName>
    <alternativeName>
        <fullName evidence="1">Glucosamine-6-phosphate synthase</fullName>
    </alternativeName>
    <alternativeName>
        <fullName evidence="1">Hexosephosphate aminotransferase</fullName>
    </alternativeName>
    <alternativeName>
        <fullName evidence="1">L-glutamine--D-fructose-6-phosphate amidotransferase</fullName>
    </alternativeName>
</protein>
<keyword id="KW-0032">Aminotransferase</keyword>
<keyword id="KW-0963">Cytoplasm</keyword>
<keyword id="KW-0315">Glutamine amidotransferase</keyword>
<keyword id="KW-0677">Repeat</keyword>
<keyword id="KW-0808">Transferase</keyword>
<comment type="function">
    <text evidence="1">Catalyzes the first step in hexosamine metabolism, converting fructose-6P into glucosamine-6P using glutamine as a nitrogen source.</text>
</comment>
<comment type="catalytic activity">
    <reaction evidence="1">
        <text>D-fructose 6-phosphate + L-glutamine = D-glucosamine 6-phosphate + L-glutamate</text>
        <dbReference type="Rhea" id="RHEA:13237"/>
        <dbReference type="ChEBI" id="CHEBI:29985"/>
        <dbReference type="ChEBI" id="CHEBI:58359"/>
        <dbReference type="ChEBI" id="CHEBI:58725"/>
        <dbReference type="ChEBI" id="CHEBI:61527"/>
        <dbReference type="EC" id="2.6.1.16"/>
    </reaction>
</comment>
<comment type="subunit">
    <text evidence="1">Homodimer.</text>
</comment>
<comment type="subcellular location">
    <subcellularLocation>
        <location evidence="1">Cytoplasm</location>
    </subcellularLocation>
</comment>
<feature type="initiator methionine" description="Removed" evidence="1">
    <location>
        <position position="1"/>
    </location>
</feature>
<feature type="chain" id="PRO_0000135406" description="Glutamine--fructose-6-phosphate aminotransferase [isomerizing]">
    <location>
        <begin position="2"/>
        <end position="616"/>
    </location>
</feature>
<feature type="domain" description="Glutamine amidotransferase type-2" evidence="1">
    <location>
        <begin position="2"/>
        <end position="222"/>
    </location>
</feature>
<feature type="domain" description="SIS 1" evidence="1">
    <location>
        <begin position="289"/>
        <end position="428"/>
    </location>
</feature>
<feature type="domain" description="SIS 2" evidence="1">
    <location>
        <begin position="461"/>
        <end position="606"/>
    </location>
</feature>
<feature type="region of interest" description="Disordered" evidence="2">
    <location>
        <begin position="70"/>
        <end position="89"/>
    </location>
</feature>
<feature type="active site" description="Nucleophile; for GATase activity" evidence="1">
    <location>
        <position position="2"/>
    </location>
</feature>
<feature type="active site" description="For Fru-6P isomerization activity" evidence="1">
    <location>
        <position position="611"/>
    </location>
</feature>
<name>GLMS_TROW8</name>
<gene>
    <name evidence="1" type="primary">glmS</name>
    <name type="ordered locus">TW158</name>
</gene>
<sequence length="616" mass="67172">MCGIIGYSGPRPAAEVLLKGLERLEYRGYDSAGIAVVTDKAYIESVKKSGKLNVLKTCLERRTTPIVGSTGIGHTRWATHGEPSDRNAHPHMDTEQSLAIVHNGIIENSDVLKRELLASGKSFTSETDTEVVAHLLSDAFKKTQDLVQAFVEVTQRLEGAFAVVAIHKDQPNTIVAAKNNSPLLLGFGQGENFLASDIAAFAEYTQRVANIDQERIVALSGDSVYITDFAGHPVDYEVHTVSWHPASVDSSGWSSFMLKEIFEEPQAVENTLKGRTEDGTVILPECDHIRDDLLAIDRVVLVGCGTAAYAAMTASYSIEAWAGLPVSVELSHEFRYREPVLNSKTLAVFISQSGETMDSLMAVRYARQAGVKTISVCNVMDSSIPKESHAVIYTKAGPEVAVASTKSFVCQIVVLYLLALYLGQLRGFRSIFPRQKAVCELNRLPVKLKQVLEIYESVRQLAHWMSDSRSILFLGRHAGYPIALEAALKLKELAYIHAEGFAAGELKHGPIALIEPGQPVFVIVPSPVGSPILHAKVISNIREIKSRGARIIAIAAEGDSAVLPHADSVLRIPLTRYSFEPLLSIVPLQIFALELAADKGFDVDRPRNLAKSVTVE</sequence>